<evidence type="ECO:0000255" key="1">
    <source>
        <dbReference type="HAMAP-Rule" id="MF_01554"/>
    </source>
</evidence>
<name>GLMM_BRUAB</name>
<sequence length="451" mass="48541">MTRKFFGTDGIRGQANSFPMTPEIAMKVGMAVGYIFRRKGQASRAVVGKDTRRSGYMLEKALVAGFTAAGMDVFLLGPIPTPAVAMLCRSLRADIGVMISASHNPFYDNGIKLFGPDGFKLSDQIELQIEAMIEGDMTPFLASHGDVGRAKRVDGDIYRYIEFAKRTLPRNISLNGLRVVVDCANGAGYKVAPAALWELGAEVITINNEPNGININEDCGSTHPIGLMKKVHEVRADVGIALDGDADRVLLVDENGTVIDGDQLMAVIAESWAASNRLEGGGIVATVMSNLGLERFLADRNLTLARTKVGDRYVVEHMREHGFNVGGEQSGHIVLSDFATTGDGLISALQILAVAQEQNKPISDVCRKFQPVPQLLKNVRTTGGKPLENKRVKSAIDEAKERLGGQGRLVIRPSGTEPLIRVMAEGDDRGLVEKVVNDIIDVISSESSAAA</sequence>
<keyword id="KW-0413">Isomerase</keyword>
<keyword id="KW-0460">Magnesium</keyword>
<keyword id="KW-0479">Metal-binding</keyword>
<keyword id="KW-0597">Phosphoprotein</keyword>
<protein>
    <recommendedName>
        <fullName evidence="1">Phosphoglucosamine mutase</fullName>
        <ecNumber evidence="1">5.4.2.10</ecNumber>
    </recommendedName>
</protein>
<organism>
    <name type="scientific">Brucella abortus biovar 1 (strain 9-941)</name>
    <dbReference type="NCBI Taxonomy" id="262698"/>
    <lineage>
        <taxon>Bacteria</taxon>
        <taxon>Pseudomonadati</taxon>
        <taxon>Pseudomonadota</taxon>
        <taxon>Alphaproteobacteria</taxon>
        <taxon>Hyphomicrobiales</taxon>
        <taxon>Brucellaceae</taxon>
        <taxon>Brucella/Ochrobactrum group</taxon>
        <taxon>Brucella</taxon>
    </lineage>
</organism>
<proteinExistence type="inferred from homology"/>
<reference key="1">
    <citation type="journal article" date="2005" name="J. Bacteriol.">
        <title>Completion of the genome sequence of Brucella abortus and comparison to the highly similar genomes of Brucella melitensis and Brucella suis.</title>
        <authorList>
            <person name="Halling S.M."/>
            <person name="Peterson-Burch B.D."/>
            <person name="Bricker B.J."/>
            <person name="Zuerner R.L."/>
            <person name="Qing Z."/>
            <person name="Li L.-L."/>
            <person name="Kapur V."/>
            <person name="Alt D.P."/>
            <person name="Olsen S.C."/>
        </authorList>
    </citation>
    <scope>NUCLEOTIDE SEQUENCE [LARGE SCALE GENOMIC DNA]</scope>
    <source>
        <strain>9-941</strain>
    </source>
</reference>
<dbReference type="EC" id="5.4.2.10" evidence="1"/>
<dbReference type="EMBL" id="AE017223">
    <property type="protein sequence ID" value="AAX74994.1"/>
    <property type="molecule type" value="Genomic_DNA"/>
</dbReference>
<dbReference type="SMR" id="Q57BJ0"/>
<dbReference type="EnsemblBacteria" id="AAX74994">
    <property type="protein sequence ID" value="AAX74994"/>
    <property type="gene ID" value="BruAb1_1675"/>
</dbReference>
<dbReference type="KEGG" id="bmb:BruAb1_1675"/>
<dbReference type="HOGENOM" id="CLU_016950_7_0_5"/>
<dbReference type="Proteomes" id="UP000000540">
    <property type="component" value="Chromosome I"/>
</dbReference>
<dbReference type="GO" id="GO:0005829">
    <property type="term" value="C:cytosol"/>
    <property type="evidence" value="ECO:0007669"/>
    <property type="project" value="TreeGrafter"/>
</dbReference>
<dbReference type="GO" id="GO:0000287">
    <property type="term" value="F:magnesium ion binding"/>
    <property type="evidence" value="ECO:0007669"/>
    <property type="project" value="UniProtKB-UniRule"/>
</dbReference>
<dbReference type="GO" id="GO:0008966">
    <property type="term" value="F:phosphoglucosamine mutase activity"/>
    <property type="evidence" value="ECO:0007669"/>
    <property type="project" value="UniProtKB-UniRule"/>
</dbReference>
<dbReference type="GO" id="GO:0004615">
    <property type="term" value="F:phosphomannomutase activity"/>
    <property type="evidence" value="ECO:0007669"/>
    <property type="project" value="TreeGrafter"/>
</dbReference>
<dbReference type="GO" id="GO:0005975">
    <property type="term" value="P:carbohydrate metabolic process"/>
    <property type="evidence" value="ECO:0007669"/>
    <property type="project" value="InterPro"/>
</dbReference>
<dbReference type="GO" id="GO:0009252">
    <property type="term" value="P:peptidoglycan biosynthetic process"/>
    <property type="evidence" value="ECO:0007669"/>
    <property type="project" value="TreeGrafter"/>
</dbReference>
<dbReference type="GO" id="GO:0006048">
    <property type="term" value="P:UDP-N-acetylglucosamine biosynthetic process"/>
    <property type="evidence" value="ECO:0007669"/>
    <property type="project" value="TreeGrafter"/>
</dbReference>
<dbReference type="CDD" id="cd05802">
    <property type="entry name" value="GlmM"/>
    <property type="match status" value="1"/>
</dbReference>
<dbReference type="FunFam" id="3.30.310.50:FF:000001">
    <property type="entry name" value="Phosphoglucosamine mutase"/>
    <property type="match status" value="1"/>
</dbReference>
<dbReference type="FunFam" id="3.40.120.10:FF:000001">
    <property type="entry name" value="Phosphoglucosamine mutase"/>
    <property type="match status" value="1"/>
</dbReference>
<dbReference type="FunFam" id="3.40.120.10:FF:000003">
    <property type="entry name" value="Phosphoglucosamine mutase"/>
    <property type="match status" value="1"/>
</dbReference>
<dbReference type="Gene3D" id="3.40.120.10">
    <property type="entry name" value="Alpha-D-Glucose-1,6-Bisphosphate, subunit A, domain 3"/>
    <property type="match status" value="3"/>
</dbReference>
<dbReference type="Gene3D" id="3.30.310.50">
    <property type="entry name" value="Alpha-D-phosphohexomutase, C-terminal domain"/>
    <property type="match status" value="1"/>
</dbReference>
<dbReference type="HAMAP" id="MF_01554_B">
    <property type="entry name" value="GlmM_B"/>
    <property type="match status" value="1"/>
</dbReference>
<dbReference type="InterPro" id="IPR005844">
    <property type="entry name" value="A-D-PHexomutase_a/b/a-I"/>
</dbReference>
<dbReference type="InterPro" id="IPR016055">
    <property type="entry name" value="A-D-PHexomutase_a/b/a-I/II/III"/>
</dbReference>
<dbReference type="InterPro" id="IPR005845">
    <property type="entry name" value="A-D-PHexomutase_a/b/a-II"/>
</dbReference>
<dbReference type="InterPro" id="IPR005846">
    <property type="entry name" value="A-D-PHexomutase_a/b/a-III"/>
</dbReference>
<dbReference type="InterPro" id="IPR005843">
    <property type="entry name" value="A-D-PHexomutase_C"/>
</dbReference>
<dbReference type="InterPro" id="IPR036900">
    <property type="entry name" value="A-D-PHexomutase_C_sf"/>
</dbReference>
<dbReference type="InterPro" id="IPR016066">
    <property type="entry name" value="A-D-PHexomutase_CS"/>
</dbReference>
<dbReference type="InterPro" id="IPR005841">
    <property type="entry name" value="Alpha-D-phosphohexomutase_SF"/>
</dbReference>
<dbReference type="InterPro" id="IPR006352">
    <property type="entry name" value="GlmM_bact"/>
</dbReference>
<dbReference type="InterPro" id="IPR050060">
    <property type="entry name" value="Phosphoglucosamine_mutase"/>
</dbReference>
<dbReference type="NCBIfam" id="TIGR01455">
    <property type="entry name" value="glmM"/>
    <property type="match status" value="1"/>
</dbReference>
<dbReference type="NCBIfam" id="NF008139">
    <property type="entry name" value="PRK10887.1"/>
    <property type="match status" value="1"/>
</dbReference>
<dbReference type="PANTHER" id="PTHR42946:SF1">
    <property type="entry name" value="PHOSPHOGLUCOMUTASE (ALPHA-D-GLUCOSE-1,6-BISPHOSPHATE-DEPENDENT)"/>
    <property type="match status" value="1"/>
</dbReference>
<dbReference type="PANTHER" id="PTHR42946">
    <property type="entry name" value="PHOSPHOHEXOSE MUTASE"/>
    <property type="match status" value="1"/>
</dbReference>
<dbReference type="Pfam" id="PF02878">
    <property type="entry name" value="PGM_PMM_I"/>
    <property type="match status" value="1"/>
</dbReference>
<dbReference type="Pfam" id="PF02879">
    <property type="entry name" value="PGM_PMM_II"/>
    <property type="match status" value="1"/>
</dbReference>
<dbReference type="Pfam" id="PF02880">
    <property type="entry name" value="PGM_PMM_III"/>
    <property type="match status" value="1"/>
</dbReference>
<dbReference type="Pfam" id="PF00408">
    <property type="entry name" value="PGM_PMM_IV"/>
    <property type="match status" value="1"/>
</dbReference>
<dbReference type="PRINTS" id="PR00509">
    <property type="entry name" value="PGMPMM"/>
</dbReference>
<dbReference type="SUPFAM" id="SSF55957">
    <property type="entry name" value="Phosphoglucomutase, C-terminal domain"/>
    <property type="match status" value="1"/>
</dbReference>
<dbReference type="SUPFAM" id="SSF53738">
    <property type="entry name" value="Phosphoglucomutase, first 3 domains"/>
    <property type="match status" value="3"/>
</dbReference>
<dbReference type="PROSITE" id="PS00710">
    <property type="entry name" value="PGM_PMM"/>
    <property type="match status" value="1"/>
</dbReference>
<comment type="function">
    <text evidence="1">Catalyzes the conversion of glucosamine-6-phosphate to glucosamine-1-phosphate.</text>
</comment>
<comment type="catalytic activity">
    <reaction evidence="1">
        <text>alpha-D-glucosamine 1-phosphate = D-glucosamine 6-phosphate</text>
        <dbReference type="Rhea" id="RHEA:23424"/>
        <dbReference type="ChEBI" id="CHEBI:58516"/>
        <dbReference type="ChEBI" id="CHEBI:58725"/>
        <dbReference type="EC" id="5.4.2.10"/>
    </reaction>
</comment>
<comment type="cofactor">
    <cofactor evidence="1">
        <name>Mg(2+)</name>
        <dbReference type="ChEBI" id="CHEBI:18420"/>
    </cofactor>
    <text evidence="1">Binds 1 Mg(2+) ion per subunit.</text>
</comment>
<comment type="PTM">
    <text evidence="1">Activated by phosphorylation.</text>
</comment>
<comment type="similarity">
    <text evidence="1">Belongs to the phosphohexose mutase family.</text>
</comment>
<feature type="chain" id="PRO_0000301286" description="Phosphoglucosamine mutase">
    <location>
        <begin position="1"/>
        <end position="451"/>
    </location>
</feature>
<feature type="active site" description="Phosphoserine intermediate" evidence="1">
    <location>
        <position position="102"/>
    </location>
</feature>
<feature type="binding site" description="via phosphate group" evidence="1">
    <location>
        <position position="102"/>
    </location>
    <ligand>
        <name>Mg(2+)</name>
        <dbReference type="ChEBI" id="CHEBI:18420"/>
    </ligand>
</feature>
<feature type="binding site" evidence="1">
    <location>
        <position position="243"/>
    </location>
    <ligand>
        <name>Mg(2+)</name>
        <dbReference type="ChEBI" id="CHEBI:18420"/>
    </ligand>
</feature>
<feature type="binding site" evidence="1">
    <location>
        <position position="245"/>
    </location>
    <ligand>
        <name>Mg(2+)</name>
        <dbReference type="ChEBI" id="CHEBI:18420"/>
    </ligand>
</feature>
<feature type="binding site" evidence="1">
    <location>
        <position position="247"/>
    </location>
    <ligand>
        <name>Mg(2+)</name>
        <dbReference type="ChEBI" id="CHEBI:18420"/>
    </ligand>
</feature>
<feature type="modified residue" description="Phosphoserine" evidence="1">
    <location>
        <position position="102"/>
    </location>
</feature>
<gene>
    <name evidence="1" type="primary">glmM</name>
    <name type="ordered locus">BruAb1_1675</name>
</gene>
<accession>Q57BJ0</accession>